<feature type="chain" id="PRO_0000235571" description="Aspartate--tRNA(Asp/Asn) ligase 1">
    <location>
        <begin position="1"/>
        <end position="723"/>
    </location>
</feature>
<feature type="region of interest" description="Aspartate" evidence="1">
    <location>
        <begin position="230"/>
        <end position="233"/>
    </location>
</feature>
<feature type="binding site" evidence="1">
    <location>
        <position position="206"/>
    </location>
    <ligand>
        <name>L-aspartate</name>
        <dbReference type="ChEBI" id="CHEBI:29991"/>
    </ligand>
</feature>
<feature type="binding site" evidence="1">
    <location>
        <begin position="252"/>
        <end position="254"/>
    </location>
    <ligand>
        <name>ATP</name>
        <dbReference type="ChEBI" id="CHEBI:30616"/>
    </ligand>
</feature>
<feature type="binding site" evidence="1">
    <location>
        <position position="252"/>
    </location>
    <ligand>
        <name>L-aspartate</name>
        <dbReference type="ChEBI" id="CHEBI:29991"/>
    </ligand>
</feature>
<feature type="binding site" evidence="1">
    <location>
        <position position="261"/>
    </location>
    <ligand>
        <name>ATP</name>
        <dbReference type="ChEBI" id="CHEBI:30616"/>
    </ligand>
</feature>
<feature type="binding site" evidence="1">
    <location>
        <position position="481"/>
    </location>
    <ligand>
        <name>L-aspartate</name>
        <dbReference type="ChEBI" id="CHEBI:29991"/>
    </ligand>
</feature>
<feature type="binding site" evidence="1">
    <location>
        <position position="516"/>
    </location>
    <ligand>
        <name>ATP</name>
        <dbReference type="ChEBI" id="CHEBI:30616"/>
    </ligand>
</feature>
<feature type="binding site" evidence="1">
    <location>
        <position position="523"/>
    </location>
    <ligand>
        <name>L-aspartate</name>
        <dbReference type="ChEBI" id="CHEBI:29991"/>
    </ligand>
</feature>
<feature type="binding site" evidence="1">
    <location>
        <begin position="568"/>
        <end position="571"/>
    </location>
    <ligand>
        <name>ATP</name>
        <dbReference type="ChEBI" id="CHEBI:30616"/>
    </ligand>
</feature>
<feature type="site" description="Important for tRNA non-discrimination" evidence="1">
    <location>
        <position position="50"/>
    </location>
</feature>
<feature type="site" description="Important for tRNA non-discrimination" evidence="1">
    <location>
        <position position="103"/>
    </location>
</feature>
<keyword id="KW-0030">Aminoacyl-tRNA synthetase</keyword>
<keyword id="KW-0067">ATP-binding</keyword>
<keyword id="KW-0963">Cytoplasm</keyword>
<keyword id="KW-0436">Ligase</keyword>
<keyword id="KW-0547">Nucleotide-binding</keyword>
<keyword id="KW-0648">Protein biosynthesis</keyword>
<keyword id="KW-1185">Reference proteome</keyword>
<protein>
    <recommendedName>
        <fullName evidence="1">Aspartate--tRNA(Asp/Asn) ligase 1</fullName>
        <ecNumber evidence="1">6.1.1.23</ecNumber>
    </recommendedName>
    <alternativeName>
        <fullName evidence="1">Aspartyl-tRNA synthetase 1</fullName>
        <shortName evidence="1">AspRS 1</shortName>
    </alternativeName>
    <alternativeName>
        <fullName evidence="1">Non-discriminating aspartyl-tRNA synthetase 1</fullName>
        <shortName evidence="1">ND-AspRS 1</shortName>
    </alternativeName>
</protein>
<name>SYDN1_SYNAS</name>
<sequence length="723" mass="80508">MPNRGAHFSISRRKDFLMDFSERVFCGHLTPDHTGRRVLLAGWVDAFRDHGGLLFIHLRDRNGIIQIVFSPEAASADVYRQAASLRAEYCVAVQGEVRKRLPGTENPHIETGDIEVFVSELTVLSESEALPFAISDKAMVAGASSAGADHVNEDLRMQYRYLDIRRPAMQKNLILRHRISQCVREFLDSRGFVEVETPVLTMSTPEGARDYLVPSRIHPRSFYALPQSPQLFKQLLMIGGMERYFQLARCFRDEDLRPNRQPEFTQLDIEASFIDEEFLYELIEELTVRMFAIGGIALSRPFPRMTYAEAMDTTGSDRPDLRFGLRMADVTGVFSRTSYSIFKQILQRGGSIKGINIKGQSEKLSKNVLQNEYAKEIAPSFGAKGMTWMRAEEGKLESNIVQFFSADELEALKRVFQVEDGDVLIMVADPSCAIVNSALGQLRLHLGNRLGLIPEGVFYPVWITEFPLFEPTDEGGVTSSHHPFTAPDRTDFDPGNIEELLSLRSRAYDLVVNGEELGGGSIRINDREVQRRIFAALGLTEEDVKNKFGFFLRAFDFAAPPHGGLALGMDRVVSMILQTPSIREVIAFPKNRSAACPLTGAPSEVKREQLAELGLLNLGDKDVLPGDAEKEDRIDHLSWVSRIGIAEGERPVMESILAQAEELAAQVGDLAGNEEPVRSVAPVANRVREGLEAVRLSFSGTGRLLKNAPAVKGDYFKVAGILD</sequence>
<proteinExistence type="inferred from homology"/>
<accession>Q2LPW5</accession>
<reference key="1">
    <citation type="journal article" date="2007" name="Proc. Natl. Acad. Sci. U.S.A.">
        <title>The genome of Syntrophus aciditrophicus: life at the thermodynamic limit of microbial growth.</title>
        <authorList>
            <person name="McInerney M.J."/>
            <person name="Rohlin L."/>
            <person name="Mouttaki H."/>
            <person name="Kim U."/>
            <person name="Krupp R.S."/>
            <person name="Rios-Hernandez L."/>
            <person name="Sieber J."/>
            <person name="Struchtemeyer C.G."/>
            <person name="Bhattacharyya A."/>
            <person name="Campbell J.W."/>
            <person name="Gunsalus R.P."/>
        </authorList>
    </citation>
    <scope>NUCLEOTIDE SEQUENCE [LARGE SCALE GENOMIC DNA]</scope>
    <source>
        <strain>SB</strain>
    </source>
</reference>
<comment type="function">
    <text evidence="1">Aspartyl-tRNA synthetase with relaxed tRNA specificity since it is able to aspartylate not only its cognate tRNA(Asp) but also tRNA(Asn). Reaction proceeds in two steps: L-aspartate is first activated by ATP to form Asp-AMP and then transferred to the acceptor end of tRNA(Asp/Asn).</text>
</comment>
<comment type="catalytic activity">
    <reaction evidence="1">
        <text>tRNA(Asx) + L-aspartate + ATP = L-aspartyl-tRNA(Asx) + AMP + diphosphate</text>
        <dbReference type="Rhea" id="RHEA:18349"/>
        <dbReference type="Rhea" id="RHEA-COMP:9710"/>
        <dbReference type="Rhea" id="RHEA-COMP:9711"/>
        <dbReference type="ChEBI" id="CHEBI:29991"/>
        <dbReference type="ChEBI" id="CHEBI:30616"/>
        <dbReference type="ChEBI" id="CHEBI:33019"/>
        <dbReference type="ChEBI" id="CHEBI:78442"/>
        <dbReference type="ChEBI" id="CHEBI:78516"/>
        <dbReference type="ChEBI" id="CHEBI:456215"/>
        <dbReference type="EC" id="6.1.1.23"/>
    </reaction>
</comment>
<comment type="subunit">
    <text evidence="1">Homodimer.</text>
</comment>
<comment type="subcellular location">
    <subcellularLocation>
        <location evidence="1">Cytoplasm</location>
    </subcellularLocation>
</comment>
<comment type="similarity">
    <text evidence="1">Belongs to the class-II aminoacyl-tRNA synthetase family. Type 1 subfamily.</text>
</comment>
<evidence type="ECO:0000255" key="1">
    <source>
        <dbReference type="HAMAP-Rule" id="MF_00044"/>
    </source>
</evidence>
<gene>
    <name evidence="1" type="primary">aspS1</name>
    <name type="ordered locus">SYNAS_04480</name>
    <name type="ORF">SYN_02602</name>
</gene>
<dbReference type="EC" id="6.1.1.23" evidence="1"/>
<dbReference type="EMBL" id="CP000252">
    <property type="protein sequence ID" value="ABC76327.1"/>
    <property type="molecule type" value="Genomic_DNA"/>
</dbReference>
<dbReference type="RefSeq" id="WP_011416361.1">
    <property type="nucleotide sequence ID" value="NC_007759.1"/>
</dbReference>
<dbReference type="SMR" id="Q2LPW5"/>
<dbReference type="STRING" id="56780.SYN_02602"/>
<dbReference type="KEGG" id="sat:SYN_02602"/>
<dbReference type="eggNOG" id="COG0173">
    <property type="taxonomic scope" value="Bacteria"/>
</dbReference>
<dbReference type="HOGENOM" id="CLU_014330_3_2_7"/>
<dbReference type="InParanoid" id="Q2LPW5"/>
<dbReference type="OrthoDB" id="9802326at2"/>
<dbReference type="Proteomes" id="UP000001933">
    <property type="component" value="Chromosome"/>
</dbReference>
<dbReference type="GO" id="GO:0005737">
    <property type="term" value="C:cytoplasm"/>
    <property type="evidence" value="ECO:0007669"/>
    <property type="project" value="UniProtKB-SubCell"/>
</dbReference>
<dbReference type="GO" id="GO:0004815">
    <property type="term" value="F:aspartate-tRNA ligase activity"/>
    <property type="evidence" value="ECO:0007669"/>
    <property type="project" value="UniProtKB-UniRule"/>
</dbReference>
<dbReference type="GO" id="GO:0050560">
    <property type="term" value="F:aspartate-tRNA(Asn) ligase activity"/>
    <property type="evidence" value="ECO:0007669"/>
    <property type="project" value="UniProtKB-EC"/>
</dbReference>
<dbReference type="GO" id="GO:0005524">
    <property type="term" value="F:ATP binding"/>
    <property type="evidence" value="ECO:0007669"/>
    <property type="project" value="UniProtKB-UniRule"/>
</dbReference>
<dbReference type="GO" id="GO:0003676">
    <property type="term" value="F:nucleic acid binding"/>
    <property type="evidence" value="ECO:0007669"/>
    <property type="project" value="InterPro"/>
</dbReference>
<dbReference type="GO" id="GO:0006422">
    <property type="term" value="P:aspartyl-tRNA aminoacylation"/>
    <property type="evidence" value="ECO:0007669"/>
    <property type="project" value="UniProtKB-UniRule"/>
</dbReference>
<dbReference type="CDD" id="cd00777">
    <property type="entry name" value="AspRS_core"/>
    <property type="match status" value="1"/>
</dbReference>
<dbReference type="CDD" id="cd04317">
    <property type="entry name" value="EcAspRS_like_N"/>
    <property type="match status" value="1"/>
</dbReference>
<dbReference type="Gene3D" id="3.30.930.10">
    <property type="entry name" value="Bira Bifunctional Protein, Domain 2"/>
    <property type="match status" value="1"/>
</dbReference>
<dbReference type="Gene3D" id="3.30.1360.30">
    <property type="entry name" value="GAD-like domain"/>
    <property type="match status" value="1"/>
</dbReference>
<dbReference type="Gene3D" id="2.40.50.140">
    <property type="entry name" value="Nucleic acid-binding proteins"/>
    <property type="match status" value="1"/>
</dbReference>
<dbReference type="HAMAP" id="MF_00044">
    <property type="entry name" value="Asp_tRNA_synth_type1"/>
    <property type="match status" value="1"/>
</dbReference>
<dbReference type="InterPro" id="IPR004364">
    <property type="entry name" value="Aa-tRNA-synt_II"/>
</dbReference>
<dbReference type="InterPro" id="IPR006195">
    <property type="entry name" value="aa-tRNA-synth_II"/>
</dbReference>
<dbReference type="InterPro" id="IPR045864">
    <property type="entry name" value="aa-tRNA-synth_II/BPL/LPL"/>
</dbReference>
<dbReference type="InterPro" id="IPR004524">
    <property type="entry name" value="Asp-tRNA-ligase_1"/>
</dbReference>
<dbReference type="InterPro" id="IPR047089">
    <property type="entry name" value="Asp-tRNA-ligase_1_N"/>
</dbReference>
<dbReference type="InterPro" id="IPR002312">
    <property type="entry name" value="Asp/Asn-tRNA-synth_IIb"/>
</dbReference>
<dbReference type="InterPro" id="IPR047090">
    <property type="entry name" value="AspRS_core"/>
</dbReference>
<dbReference type="InterPro" id="IPR004115">
    <property type="entry name" value="GAD-like_sf"/>
</dbReference>
<dbReference type="InterPro" id="IPR029351">
    <property type="entry name" value="GAD_dom"/>
</dbReference>
<dbReference type="InterPro" id="IPR012340">
    <property type="entry name" value="NA-bd_OB-fold"/>
</dbReference>
<dbReference type="InterPro" id="IPR004365">
    <property type="entry name" value="NA-bd_OB_tRNA"/>
</dbReference>
<dbReference type="NCBIfam" id="TIGR00459">
    <property type="entry name" value="aspS_bact"/>
    <property type="match status" value="1"/>
</dbReference>
<dbReference type="NCBIfam" id="NF001750">
    <property type="entry name" value="PRK00476.1"/>
    <property type="match status" value="1"/>
</dbReference>
<dbReference type="NCBIfam" id="NF009460">
    <property type="entry name" value="PRK12820.1"/>
    <property type="match status" value="1"/>
</dbReference>
<dbReference type="PANTHER" id="PTHR22594:SF5">
    <property type="entry name" value="ASPARTATE--TRNA LIGASE, MITOCHONDRIAL"/>
    <property type="match status" value="1"/>
</dbReference>
<dbReference type="PANTHER" id="PTHR22594">
    <property type="entry name" value="ASPARTYL/LYSYL-TRNA SYNTHETASE"/>
    <property type="match status" value="1"/>
</dbReference>
<dbReference type="Pfam" id="PF02938">
    <property type="entry name" value="GAD"/>
    <property type="match status" value="1"/>
</dbReference>
<dbReference type="Pfam" id="PF00152">
    <property type="entry name" value="tRNA-synt_2"/>
    <property type="match status" value="1"/>
</dbReference>
<dbReference type="Pfam" id="PF01336">
    <property type="entry name" value="tRNA_anti-codon"/>
    <property type="match status" value="1"/>
</dbReference>
<dbReference type="PRINTS" id="PR01042">
    <property type="entry name" value="TRNASYNTHASP"/>
</dbReference>
<dbReference type="SUPFAM" id="SSF55681">
    <property type="entry name" value="Class II aaRS and biotin synthetases"/>
    <property type="match status" value="1"/>
</dbReference>
<dbReference type="SUPFAM" id="SSF55261">
    <property type="entry name" value="GAD domain-like"/>
    <property type="match status" value="1"/>
</dbReference>
<dbReference type="SUPFAM" id="SSF50249">
    <property type="entry name" value="Nucleic acid-binding proteins"/>
    <property type="match status" value="1"/>
</dbReference>
<dbReference type="PROSITE" id="PS50862">
    <property type="entry name" value="AA_TRNA_LIGASE_II"/>
    <property type="match status" value="1"/>
</dbReference>
<organism>
    <name type="scientific">Syntrophus aciditrophicus (strain SB)</name>
    <dbReference type="NCBI Taxonomy" id="56780"/>
    <lineage>
        <taxon>Bacteria</taxon>
        <taxon>Pseudomonadati</taxon>
        <taxon>Thermodesulfobacteriota</taxon>
        <taxon>Syntrophia</taxon>
        <taxon>Syntrophales</taxon>
        <taxon>Syntrophaceae</taxon>
        <taxon>Syntrophus</taxon>
    </lineage>
</organism>